<keyword id="KW-0687">Ribonucleoprotein</keyword>
<keyword id="KW-0689">Ribosomal protein</keyword>
<keyword id="KW-0694">RNA-binding</keyword>
<keyword id="KW-0699">rRNA-binding</keyword>
<name>RL9_ACIBY</name>
<protein>
    <recommendedName>
        <fullName evidence="1">Large ribosomal subunit protein bL9</fullName>
    </recommendedName>
    <alternativeName>
        <fullName evidence="2">50S ribosomal protein L9</fullName>
    </alternativeName>
</protein>
<comment type="function">
    <text evidence="1">Binds to the 23S rRNA.</text>
</comment>
<comment type="similarity">
    <text evidence="1">Belongs to the bacterial ribosomal protein bL9 family.</text>
</comment>
<organism>
    <name type="scientific">Acinetobacter baumannii (strain AYE)</name>
    <dbReference type="NCBI Taxonomy" id="509173"/>
    <lineage>
        <taxon>Bacteria</taxon>
        <taxon>Pseudomonadati</taxon>
        <taxon>Pseudomonadota</taxon>
        <taxon>Gammaproteobacteria</taxon>
        <taxon>Moraxellales</taxon>
        <taxon>Moraxellaceae</taxon>
        <taxon>Acinetobacter</taxon>
        <taxon>Acinetobacter calcoaceticus/baumannii complex</taxon>
    </lineage>
</organism>
<gene>
    <name evidence="1" type="primary">rplI</name>
    <name type="ordered locus">ABAYE1382</name>
</gene>
<reference key="1">
    <citation type="journal article" date="2008" name="PLoS ONE">
        <title>Comparative analysis of Acinetobacters: three genomes for three lifestyles.</title>
        <authorList>
            <person name="Vallenet D."/>
            <person name="Nordmann P."/>
            <person name="Barbe V."/>
            <person name="Poirel L."/>
            <person name="Mangenot S."/>
            <person name="Bataille E."/>
            <person name="Dossat C."/>
            <person name="Gas S."/>
            <person name="Kreimeyer A."/>
            <person name="Lenoble P."/>
            <person name="Oztas S."/>
            <person name="Poulain J."/>
            <person name="Segurens B."/>
            <person name="Robert C."/>
            <person name="Abergel C."/>
            <person name="Claverie J.-M."/>
            <person name="Raoult D."/>
            <person name="Medigue C."/>
            <person name="Weissenbach J."/>
            <person name="Cruveiller S."/>
        </authorList>
    </citation>
    <scope>NUCLEOTIDE SEQUENCE [LARGE SCALE GENOMIC DNA]</scope>
    <source>
        <strain>AYE</strain>
    </source>
</reference>
<feature type="chain" id="PRO_1000126854" description="Large ribosomal subunit protein bL9">
    <location>
        <begin position="1"/>
        <end position="148"/>
    </location>
</feature>
<sequence length="148" mass="15781">MDVILLQRIKNLGKLGDKVSVKAGYGRNFLIPQGKAVAATEANTAAFEARRAELEKQEAEVLAAAQARAEQLNEVNIVITAKAGDEGKLFGSIGTRDIADALTNAGLTVDRAEVRLPNGALRHTGEFNIAIQLHHDVVAEVLVTIVSE</sequence>
<proteinExistence type="inferred from homology"/>
<evidence type="ECO:0000255" key="1">
    <source>
        <dbReference type="HAMAP-Rule" id="MF_00503"/>
    </source>
</evidence>
<evidence type="ECO:0000305" key="2"/>
<dbReference type="EMBL" id="CU459141">
    <property type="protein sequence ID" value="CAM86295.1"/>
    <property type="molecule type" value="Genomic_DNA"/>
</dbReference>
<dbReference type="RefSeq" id="WP_000382591.1">
    <property type="nucleotide sequence ID" value="NZ_JBDGFB010000016.1"/>
</dbReference>
<dbReference type="SMR" id="B0V7G5"/>
<dbReference type="EnsemblBacteria" id="CAM86295">
    <property type="protein sequence ID" value="CAM86295"/>
    <property type="gene ID" value="ABAYE1382"/>
</dbReference>
<dbReference type="GeneID" id="92894415"/>
<dbReference type="KEGG" id="aby:ABAYE1382"/>
<dbReference type="HOGENOM" id="CLU_078938_4_1_6"/>
<dbReference type="GO" id="GO:1990904">
    <property type="term" value="C:ribonucleoprotein complex"/>
    <property type="evidence" value="ECO:0007669"/>
    <property type="project" value="UniProtKB-KW"/>
</dbReference>
<dbReference type="GO" id="GO:0005840">
    <property type="term" value="C:ribosome"/>
    <property type="evidence" value="ECO:0007669"/>
    <property type="project" value="UniProtKB-KW"/>
</dbReference>
<dbReference type="GO" id="GO:0019843">
    <property type="term" value="F:rRNA binding"/>
    <property type="evidence" value="ECO:0007669"/>
    <property type="project" value="UniProtKB-UniRule"/>
</dbReference>
<dbReference type="GO" id="GO:0003735">
    <property type="term" value="F:structural constituent of ribosome"/>
    <property type="evidence" value="ECO:0007669"/>
    <property type="project" value="InterPro"/>
</dbReference>
<dbReference type="GO" id="GO:0006412">
    <property type="term" value="P:translation"/>
    <property type="evidence" value="ECO:0007669"/>
    <property type="project" value="UniProtKB-UniRule"/>
</dbReference>
<dbReference type="Gene3D" id="3.10.430.100">
    <property type="entry name" value="Ribosomal protein L9, C-terminal domain"/>
    <property type="match status" value="1"/>
</dbReference>
<dbReference type="Gene3D" id="3.40.5.10">
    <property type="entry name" value="Ribosomal protein L9, N-terminal domain"/>
    <property type="match status" value="1"/>
</dbReference>
<dbReference type="HAMAP" id="MF_00503">
    <property type="entry name" value="Ribosomal_bL9"/>
    <property type="match status" value="1"/>
</dbReference>
<dbReference type="InterPro" id="IPR000244">
    <property type="entry name" value="Ribosomal_bL9"/>
</dbReference>
<dbReference type="InterPro" id="IPR009027">
    <property type="entry name" value="Ribosomal_bL9/RNase_H1_N"/>
</dbReference>
<dbReference type="InterPro" id="IPR020594">
    <property type="entry name" value="Ribosomal_bL9_bac/chp"/>
</dbReference>
<dbReference type="InterPro" id="IPR020069">
    <property type="entry name" value="Ribosomal_bL9_C"/>
</dbReference>
<dbReference type="InterPro" id="IPR036791">
    <property type="entry name" value="Ribosomal_bL9_C_sf"/>
</dbReference>
<dbReference type="InterPro" id="IPR020070">
    <property type="entry name" value="Ribosomal_bL9_N"/>
</dbReference>
<dbReference type="InterPro" id="IPR036935">
    <property type="entry name" value="Ribosomal_bL9_N_sf"/>
</dbReference>
<dbReference type="NCBIfam" id="TIGR00158">
    <property type="entry name" value="L9"/>
    <property type="match status" value="1"/>
</dbReference>
<dbReference type="PANTHER" id="PTHR21368">
    <property type="entry name" value="50S RIBOSOMAL PROTEIN L9"/>
    <property type="match status" value="1"/>
</dbReference>
<dbReference type="Pfam" id="PF03948">
    <property type="entry name" value="Ribosomal_L9_C"/>
    <property type="match status" value="1"/>
</dbReference>
<dbReference type="Pfam" id="PF01281">
    <property type="entry name" value="Ribosomal_L9_N"/>
    <property type="match status" value="1"/>
</dbReference>
<dbReference type="SUPFAM" id="SSF55658">
    <property type="entry name" value="L9 N-domain-like"/>
    <property type="match status" value="1"/>
</dbReference>
<dbReference type="SUPFAM" id="SSF55653">
    <property type="entry name" value="Ribosomal protein L9 C-domain"/>
    <property type="match status" value="1"/>
</dbReference>
<dbReference type="PROSITE" id="PS00651">
    <property type="entry name" value="RIBOSOMAL_L9"/>
    <property type="match status" value="1"/>
</dbReference>
<accession>B0V7G5</accession>